<keyword id="KW-0131">Cell cycle</keyword>
<keyword id="KW-0132">Cell division</keyword>
<keyword id="KW-0342">GTP-binding</keyword>
<keyword id="KW-0460">Magnesium</keyword>
<keyword id="KW-0479">Metal-binding</keyword>
<keyword id="KW-0547">Nucleotide-binding</keyword>
<keyword id="KW-1185">Reference proteome</keyword>
<keyword id="KW-0717">Septation</keyword>
<reference key="1">
    <citation type="journal article" date="2007" name="J. Bacteriol.">
        <title>The genome sequence of avian pathogenic Escherichia coli strain O1:K1:H7 shares strong similarities with human extraintestinal pathogenic E. coli genomes.</title>
        <authorList>
            <person name="Johnson T.J."/>
            <person name="Kariyawasam S."/>
            <person name="Wannemuehler Y."/>
            <person name="Mangiamele P."/>
            <person name="Johnson S.J."/>
            <person name="Doetkott C."/>
            <person name="Skyberg J.A."/>
            <person name="Lynne A.M."/>
            <person name="Johnson J.R."/>
            <person name="Nolan L.K."/>
        </authorList>
    </citation>
    <scope>NUCLEOTIDE SEQUENCE [LARGE SCALE GENOMIC DNA]</scope>
</reference>
<name>ENGB_ECOK1</name>
<sequence>METTALTNLNYQQTHFVMSAPDIRHLPSDTGIEVAFAGRSNAGKSSALNTLTNQKSLARTSKTPGRTQLINLFEVADGKRLVDLPGYGYAEVPEEMKRKWQRALGEYLEKRQSLQGLVVLMDIRHPLKDLDQQMIEWAVDSNIAVLVLLTKADKLASGARKAQLNMVREAVLAFNGDVQVETFSSLKKQGVDKLRQKLDTWFSEMQPVEETQDGE</sequence>
<comment type="function">
    <text evidence="1">Necessary for normal cell division and for the maintenance of normal septation.</text>
</comment>
<comment type="cofactor">
    <cofactor evidence="1">
        <name>Mg(2+)</name>
        <dbReference type="ChEBI" id="CHEBI:18420"/>
    </cofactor>
</comment>
<comment type="similarity">
    <text evidence="1">Belongs to the TRAFAC class TrmE-Era-EngA-EngB-Septin-like GTPase superfamily. EngB GTPase family.</text>
</comment>
<dbReference type="EMBL" id="CP000468">
    <property type="protein sequence ID" value="ABJ03337.1"/>
    <property type="molecule type" value="Genomic_DNA"/>
</dbReference>
<dbReference type="SMR" id="A1AI47"/>
<dbReference type="KEGG" id="ecv:APECO1_2597"/>
<dbReference type="HOGENOM" id="CLU_033732_1_2_6"/>
<dbReference type="Proteomes" id="UP000008216">
    <property type="component" value="Chromosome"/>
</dbReference>
<dbReference type="GO" id="GO:0005829">
    <property type="term" value="C:cytosol"/>
    <property type="evidence" value="ECO:0007669"/>
    <property type="project" value="TreeGrafter"/>
</dbReference>
<dbReference type="GO" id="GO:0005525">
    <property type="term" value="F:GTP binding"/>
    <property type="evidence" value="ECO:0007669"/>
    <property type="project" value="UniProtKB-UniRule"/>
</dbReference>
<dbReference type="GO" id="GO:0046872">
    <property type="term" value="F:metal ion binding"/>
    <property type="evidence" value="ECO:0007669"/>
    <property type="project" value="UniProtKB-KW"/>
</dbReference>
<dbReference type="GO" id="GO:0000917">
    <property type="term" value="P:division septum assembly"/>
    <property type="evidence" value="ECO:0007669"/>
    <property type="project" value="UniProtKB-KW"/>
</dbReference>
<dbReference type="CDD" id="cd01876">
    <property type="entry name" value="YihA_EngB"/>
    <property type="match status" value="1"/>
</dbReference>
<dbReference type="FunFam" id="3.40.50.300:FF:000098">
    <property type="entry name" value="Probable GTP-binding protein EngB"/>
    <property type="match status" value="1"/>
</dbReference>
<dbReference type="Gene3D" id="3.40.50.300">
    <property type="entry name" value="P-loop containing nucleotide triphosphate hydrolases"/>
    <property type="match status" value="1"/>
</dbReference>
<dbReference type="HAMAP" id="MF_00321">
    <property type="entry name" value="GTPase_EngB"/>
    <property type="match status" value="1"/>
</dbReference>
<dbReference type="InterPro" id="IPR030393">
    <property type="entry name" value="G_ENGB_dom"/>
</dbReference>
<dbReference type="InterPro" id="IPR006073">
    <property type="entry name" value="GTP-bd"/>
</dbReference>
<dbReference type="InterPro" id="IPR019987">
    <property type="entry name" value="GTP-bd_ribosome_bio_YsxC"/>
</dbReference>
<dbReference type="InterPro" id="IPR027417">
    <property type="entry name" value="P-loop_NTPase"/>
</dbReference>
<dbReference type="NCBIfam" id="TIGR03598">
    <property type="entry name" value="GTPase_YsxC"/>
    <property type="match status" value="1"/>
</dbReference>
<dbReference type="PANTHER" id="PTHR11649:SF13">
    <property type="entry name" value="ENGB-TYPE G DOMAIN-CONTAINING PROTEIN"/>
    <property type="match status" value="1"/>
</dbReference>
<dbReference type="PANTHER" id="PTHR11649">
    <property type="entry name" value="MSS1/TRME-RELATED GTP-BINDING PROTEIN"/>
    <property type="match status" value="1"/>
</dbReference>
<dbReference type="Pfam" id="PF01926">
    <property type="entry name" value="MMR_HSR1"/>
    <property type="match status" value="1"/>
</dbReference>
<dbReference type="SUPFAM" id="SSF52540">
    <property type="entry name" value="P-loop containing nucleoside triphosphate hydrolases"/>
    <property type="match status" value="1"/>
</dbReference>
<dbReference type="PROSITE" id="PS51706">
    <property type="entry name" value="G_ENGB"/>
    <property type="match status" value="1"/>
</dbReference>
<proteinExistence type="inferred from homology"/>
<gene>
    <name evidence="1" type="primary">engB</name>
    <name type="ordered locus">Ecok1_38430</name>
    <name type="ORF">APECO1_2597</name>
</gene>
<protein>
    <recommendedName>
        <fullName evidence="1">Probable GTP-binding protein EngB</fullName>
    </recommendedName>
</protein>
<feature type="chain" id="PRO_1000205124" description="Probable GTP-binding protein EngB">
    <location>
        <begin position="1"/>
        <end position="215"/>
    </location>
</feature>
<feature type="domain" description="EngB-type G" evidence="1">
    <location>
        <begin position="30"/>
        <end position="204"/>
    </location>
</feature>
<feature type="binding site" evidence="1">
    <location>
        <begin position="38"/>
        <end position="45"/>
    </location>
    <ligand>
        <name>GTP</name>
        <dbReference type="ChEBI" id="CHEBI:37565"/>
    </ligand>
</feature>
<feature type="binding site" evidence="1">
    <location>
        <position position="45"/>
    </location>
    <ligand>
        <name>Mg(2+)</name>
        <dbReference type="ChEBI" id="CHEBI:18420"/>
    </ligand>
</feature>
<feature type="binding site" evidence="1">
    <location>
        <begin position="65"/>
        <end position="69"/>
    </location>
    <ligand>
        <name>GTP</name>
        <dbReference type="ChEBI" id="CHEBI:37565"/>
    </ligand>
</feature>
<feature type="binding site" evidence="1">
    <location>
        <position position="67"/>
    </location>
    <ligand>
        <name>Mg(2+)</name>
        <dbReference type="ChEBI" id="CHEBI:18420"/>
    </ligand>
</feature>
<feature type="binding site" evidence="1">
    <location>
        <begin position="83"/>
        <end position="86"/>
    </location>
    <ligand>
        <name>GTP</name>
        <dbReference type="ChEBI" id="CHEBI:37565"/>
    </ligand>
</feature>
<feature type="binding site" evidence="1">
    <location>
        <begin position="150"/>
        <end position="153"/>
    </location>
    <ligand>
        <name>GTP</name>
        <dbReference type="ChEBI" id="CHEBI:37565"/>
    </ligand>
</feature>
<feature type="binding site" evidence="1">
    <location>
        <begin position="183"/>
        <end position="185"/>
    </location>
    <ligand>
        <name>GTP</name>
        <dbReference type="ChEBI" id="CHEBI:37565"/>
    </ligand>
</feature>
<organism>
    <name type="scientific">Escherichia coli O1:K1 / APEC</name>
    <dbReference type="NCBI Taxonomy" id="405955"/>
    <lineage>
        <taxon>Bacteria</taxon>
        <taxon>Pseudomonadati</taxon>
        <taxon>Pseudomonadota</taxon>
        <taxon>Gammaproteobacteria</taxon>
        <taxon>Enterobacterales</taxon>
        <taxon>Enterobacteriaceae</taxon>
        <taxon>Escherichia</taxon>
    </lineage>
</organism>
<accession>A1AI47</accession>
<evidence type="ECO:0000255" key="1">
    <source>
        <dbReference type="HAMAP-Rule" id="MF_00321"/>
    </source>
</evidence>